<protein>
    <recommendedName>
        <fullName evidence="1">Vacuolar ATPase assembly integral membrane protein VMA21</fullName>
    </recommendedName>
</protein>
<name>VMA21_YEAS1</name>
<proteinExistence type="inferred from homology"/>
<organism>
    <name type="scientific">Saccharomyces cerevisiae (strain RM11-1a)</name>
    <name type="common">Baker's yeast</name>
    <dbReference type="NCBI Taxonomy" id="285006"/>
    <lineage>
        <taxon>Eukaryota</taxon>
        <taxon>Fungi</taxon>
        <taxon>Dikarya</taxon>
        <taxon>Ascomycota</taxon>
        <taxon>Saccharomycotina</taxon>
        <taxon>Saccharomycetes</taxon>
        <taxon>Saccharomycetales</taxon>
        <taxon>Saccharomycetaceae</taxon>
        <taxon>Saccharomyces</taxon>
    </lineage>
</organism>
<keyword id="KW-0968">Cytoplasmic vesicle</keyword>
<keyword id="KW-0256">Endoplasmic reticulum</keyword>
<keyword id="KW-0472">Membrane</keyword>
<keyword id="KW-0812">Transmembrane</keyword>
<keyword id="KW-1133">Transmembrane helix</keyword>
<comment type="function">
    <text evidence="1">Functions with VOA1 in assembly of the integral membrane sector (also called V0 sector) of the V-ATPase in the endoplasmic reticulum. Escorts the assembled V0 sector in COPII vesicles. Also required for normal packaging of the SNARE BOS1 and possibly the ER to Golgi transport receptor ERV29.</text>
</comment>
<comment type="subcellular location">
    <subcellularLocation>
        <location evidence="1">Endoplasmic reticulum membrane</location>
        <topology evidence="1">Multi-pass membrane protein</topology>
    </subcellularLocation>
    <subcellularLocation>
        <location evidence="1">Endoplasmic reticulum-Golgi intermediate compartment membrane</location>
        <topology evidence="1">Multi-pass membrane protein</topology>
    </subcellularLocation>
    <subcellularLocation>
        <location evidence="1">Cytoplasmic vesicle</location>
        <location evidence="1">COPII-coated vesicle membrane</location>
        <topology evidence="1">Multi-pass membrane protein</topology>
    </subcellularLocation>
</comment>
<comment type="similarity">
    <text evidence="1">Belongs to the VMA21 family.</text>
</comment>
<gene>
    <name evidence="1" type="primary">VMA21</name>
    <name type="ORF">SCRG_00912</name>
</gene>
<accession>B3LIC1</accession>
<dbReference type="EMBL" id="CH408044">
    <property type="protein sequence ID" value="EDV10142.1"/>
    <property type="molecule type" value="Genomic_DNA"/>
</dbReference>
<dbReference type="SMR" id="B3LIC1"/>
<dbReference type="HOGENOM" id="CLU_154717_1_0_1"/>
<dbReference type="OrthoDB" id="31372at4893"/>
<dbReference type="Proteomes" id="UP000008335">
    <property type="component" value="Unassembled WGS sequence"/>
</dbReference>
<dbReference type="GO" id="GO:0005789">
    <property type="term" value="C:endoplasmic reticulum membrane"/>
    <property type="evidence" value="ECO:0007669"/>
    <property type="project" value="UniProtKB-SubCell"/>
</dbReference>
<dbReference type="GO" id="GO:0033116">
    <property type="term" value="C:endoplasmic reticulum-Golgi intermediate compartment membrane"/>
    <property type="evidence" value="ECO:0007669"/>
    <property type="project" value="UniProtKB-SubCell"/>
</dbReference>
<dbReference type="GO" id="GO:0012507">
    <property type="term" value="C:ER to Golgi transport vesicle membrane"/>
    <property type="evidence" value="ECO:0007669"/>
    <property type="project" value="UniProtKB-SubCell"/>
</dbReference>
<dbReference type="GO" id="GO:0070072">
    <property type="term" value="P:vacuolar proton-transporting V-type ATPase complex assembly"/>
    <property type="evidence" value="ECO:0007669"/>
    <property type="project" value="UniProtKB-UniRule"/>
</dbReference>
<dbReference type="HAMAP" id="MF_03058">
    <property type="entry name" value="VMA21"/>
    <property type="match status" value="1"/>
</dbReference>
<dbReference type="InterPro" id="IPR019013">
    <property type="entry name" value="Vma21"/>
</dbReference>
<dbReference type="PANTHER" id="PTHR31792">
    <property type="entry name" value="VACUOLAR ATPASE ASSEMBLY INTEGRAL MEMBRANE PROTEIN VMA21"/>
    <property type="match status" value="1"/>
</dbReference>
<dbReference type="PANTHER" id="PTHR31792:SF3">
    <property type="entry name" value="VACUOLAR ATPASE ASSEMBLY INTEGRAL MEMBRANE PROTEIN VMA21"/>
    <property type="match status" value="1"/>
</dbReference>
<dbReference type="Pfam" id="PF09446">
    <property type="entry name" value="VMA21"/>
    <property type="match status" value="1"/>
</dbReference>
<sequence>MAVDVPRAVINKLMLFTAAMVVLPVLTFFIIQQFTPNTLISGGLAAAMANVVLIVYIVVAFREDTEDHKVDGNKKED</sequence>
<feature type="chain" id="PRO_0000377600" description="Vacuolar ATPase assembly integral membrane protein VMA21">
    <location>
        <begin position="1"/>
        <end position="77"/>
    </location>
</feature>
<feature type="topological domain" description="Cytoplasmic" evidence="1">
    <location>
        <begin position="1"/>
        <end position="13"/>
    </location>
</feature>
<feature type="transmembrane region" description="Helical" evidence="1">
    <location>
        <begin position="14"/>
        <end position="34"/>
    </location>
</feature>
<feature type="topological domain" description="Lumenal" evidence="1">
    <location>
        <begin position="35"/>
        <end position="38"/>
    </location>
</feature>
<feature type="transmembrane region" description="Helical" evidence="1">
    <location>
        <begin position="39"/>
        <end position="59"/>
    </location>
</feature>
<feature type="topological domain" description="Cytoplasmic" evidence="1">
    <location>
        <begin position="60"/>
        <end position="77"/>
    </location>
</feature>
<feature type="short sequence motif" description="Prevents secretion from ER">
    <location>
        <begin position="74"/>
        <end position="77"/>
    </location>
</feature>
<reference key="1">
    <citation type="submission" date="2005-03" db="EMBL/GenBank/DDBJ databases">
        <title>Annotation of the Saccharomyces cerevisiae RM11-1a genome.</title>
        <authorList>
            <consortium name="The Broad Institute Genome Sequencing Platform"/>
            <person name="Birren B.W."/>
            <person name="Lander E.S."/>
            <person name="Galagan J.E."/>
            <person name="Nusbaum C."/>
            <person name="Devon K."/>
            <person name="Cuomo C."/>
            <person name="Jaffe D.B."/>
            <person name="Butler J."/>
            <person name="Alvarez P."/>
            <person name="Gnerre S."/>
            <person name="Grabherr M."/>
            <person name="Kleber M."/>
            <person name="Mauceli E.W."/>
            <person name="Brockman W."/>
            <person name="MacCallum I.A."/>
            <person name="Rounsley S."/>
            <person name="Young S.K."/>
            <person name="LaButti K."/>
            <person name="Pushparaj V."/>
            <person name="DeCaprio D."/>
            <person name="Crawford M."/>
            <person name="Koehrsen M."/>
            <person name="Engels R."/>
            <person name="Montgomery P."/>
            <person name="Pearson M."/>
            <person name="Howarth C."/>
            <person name="Larson L."/>
            <person name="Luoma S."/>
            <person name="White J."/>
            <person name="O'Leary S."/>
            <person name="Kodira C.D."/>
            <person name="Zeng Q."/>
            <person name="Yandava C."/>
            <person name="Alvarado L."/>
            <person name="Pratt S."/>
            <person name="Kruglyak L."/>
        </authorList>
    </citation>
    <scope>NUCLEOTIDE SEQUENCE [LARGE SCALE GENOMIC DNA]</scope>
    <source>
        <strain>RM11-1a</strain>
    </source>
</reference>
<evidence type="ECO:0000255" key="1">
    <source>
        <dbReference type="HAMAP-Rule" id="MF_03058"/>
    </source>
</evidence>